<dbReference type="EC" id="7.1.1.-" evidence="1"/>
<dbReference type="EMBL" id="AP009370">
    <property type="protein sequence ID" value="BAF50167.1"/>
    <property type="molecule type" value="Genomic_DNA"/>
</dbReference>
<dbReference type="RefSeq" id="YP_001123342.1">
    <property type="nucleotide sequence ID" value="NC_009269.1"/>
</dbReference>
<dbReference type="SMR" id="A4QKG2"/>
<dbReference type="GeneID" id="4961877"/>
<dbReference type="GO" id="GO:0009535">
    <property type="term" value="C:chloroplast thylakoid membrane"/>
    <property type="evidence" value="ECO:0007669"/>
    <property type="project" value="UniProtKB-SubCell"/>
</dbReference>
<dbReference type="GO" id="GO:0003954">
    <property type="term" value="F:NADH dehydrogenase activity"/>
    <property type="evidence" value="ECO:0007669"/>
    <property type="project" value="TreeGrafter"/>
</dbReference>
<dbReference type="GO" id="GO:0016655">
    <property type="term" value="F:oxidoreductase activity, acting on NAD(P)H, quinone or similar compound as acceptor"/>
    <property type="evidence" value="ECO:0007669"/>
    <property type="project" value="UniProtKB-UniRule"/>
</dbReference>
<dbReference type="GO" id="GO:0048038">
    <property type="term" value="F:quinone binding"/>
    <property type="evidence" value="ECO:0007669"/>
    <property type="project" value="UniProtKB-KW"/>
</dbReference>
<dbReference type="GO" id="GO:0009060">
    <property type="term" value="P:aerobic respiration"/>
    <property type="evidence" value="ECO:0007669"/>
    <property type="project" value="TreeGrafter"/>
</dbReference>
<dbReference type="GO" id="GO:0019684">
    <property type="term" value="P:photosynthesis, light reaction"/>
    <property type="evidence" value="ECO:0007669"/>
    <property type="project" value="UniProtKB-UniRule"/>
</dbReference>
<dbReference type="HAMAP" id="MF_01350">
    <property type="entry name" value="NDH1_NuoH"/>
    <property type="match status" value="1"/>
</dbReference>
<dbReference type="InterPro" id="IPR001694">
    <property type="entry name" value="NADH_UbQ_OxRdtase_su1/FPO"/>
</dbReference>
<dbReference type="InterPro" id="IPR018086">
    <property type="entry name" value="NADH_UbQ_OxRdtase_su1_CS"/>
</dbReference>
<dbReference type="NCBIfam" id="NF004741">
    <property type="entry name" value="PRK06076.1-2"/>
    <property type="match status" value="1"/>
</dbReference>
<dbReference type="PANTHER" id="PTHR11432">
    <property type="entry name" value="NADH DEHYDROGENASE SUBUNIT 1"/>
    <property type="match status" value="1"/>
</dbReference>
<dbReference type="PANTHER" id="PTHR11432:SF3">
    <property type="entry name" value="NADH-UBIQUINONE OXIDOREDUCTASE CHAIN 1"/>
    <property type="match status" value="1"/>
</dbReference>
<dbReference type="Pfam" id="PF00146">
    <property type="entry name" value="NADHdh"/>
    <property type="match status" value="1"/>
</dbReference>
<dbReference type="PROSITE" id="PS00667">
    <property type="entry name" value="COMPLEX1_ND1_1"/>
    <property type="match status" value="1"/>
</dbReference>
<dbReference type="PROSITE" id="PS00668">
    <property type="entry name" value="COMPLEX1_ND1_2"/>
    <property type="match status" value="1"/>
</dbReference>
<accession>A4QKG2</accession>
<reference key="1">
    <citation type="submission" date="2007-03" db="EMBL/GenBank/DDBJ databases">
        <title>Sequencing analysis of Barbarea verna chloroplast DNA.</title>
        <authorList>
            <person name="Hosouchi T."/>
            <person name="Tsuruoka H."/>
            <person name="Kotani H."/>
        </authorList>
    </citation>
    <scope>NUCLEOTIDE SEQUENCE [LARGE SCALE GENOMIC DNA]</scope>
</reference>
<name>NU1C_BARVE</name>
<organism>
    <name type="scientific">Barbarea verna</name>
    <name type="common">Land cress</name>
    <name type="synonym">Erysimum vernum</name>
    <dbReference type="NCBI Taxonomy" id="50458"/>
    <lineage>
        <taxon>Eukaryota</taxon>
        <taxon>Viridiplantae</taxon>
        <taxon>Streptophyta</taxon>
        <taxon>Embryophyta</taxon>
        <taxon>Tracheophyta</taxon>
        <taxon>Spermatophyta</taxon>
        <taxon>Magnoliopsida</taxon>
        <taxon>eudicotyledons</taxon>
        <taxon>Gunneridae</taxon>
        <taxon>Pentapetalae</taxon>
        <taxon>rosids</taxon>
        <taxon>malvids</taxon>
        <taxon>Brassicales</taxon>
        <taxon>Brassicaceae</taxon>
        <taxon>Cardamineae</taxon>
        <taxon>Barbarea</taxon>
    </lineage>
</organism>
<comment type="function">
    <text evidence="1">NDH shuttles electrons from NAD(P)H:plastoquinone, via FMN and iron-sulfur (Fe-S) centers, to quinones in the photosynthetic chain and possibly in a chloroplast respiratory chain. The immediate electron acceptor for the enzyme in this species is believed to be plastoquinone. Couples the redox reaction to proton translocation, and thus conserves the redox energy in a proton gradient.</text>
</comment>
<comment type="catalytic activity">
    <reaction evidence="1">
        <text>a plastoquinone + NADH + (n+1) H(+)(in) = a plastoquinol + NAD(+) + n H(+)(out)</text>
        <dbReference type="Rhea" id="RHEA:42608"/>
        <dbReference type="Rhea" id="RHEA-COMP:9561"/>
        <dbReference type="Rhea" id="RHEA-COMP:9562"/>
        <dbReference type="ChEBI" id="CHEBI:15378"/>
        <dbReference type="ChEBI" id="CHEBI:17757"/>
        <dbReference type="ChEBI" id="CHEBI:57540"/>
        <dbReference type="ChEBI" id="CHEBI:57945"/>
        <dbReference type="ChEBI" id="CHEBI:62192"/>
    </reaction>
</comment>
<comment type="catalytic activity">
    <reaction evidence="1">
        <text>a plastoquinone + NADPH + (n+1) H(+)(in) = a plastoquinol + NADP(+) + n H(+)(out)</text>
        <dbReference type="Rhea" id="RHEA:42612"/>
        <dbReference type="Rhea" id="RHEA-COMP:9561"/>
        <dbReference type="Rhea" id="RHEA-COMP:9562"/>
        <dbReference type="ChEBI" id="CHEBI:15378"/>
        <dbReference type="ChEBI" id="CHEBI:17757"/>
        <dbReference type="ChEBI" id="CHEBI:57783"/>
        <dbReference type="ChEBI" id="CHEBI:58349"/>
        <dbReference type="ChEBI" id="CHEBI:62192"/>
    </reaction>
</comment>
<comment type="subunit">
    <text evidence="1">NDH is composed of at least 16 different subunits, 5 of which are encoded in the nucleus.</text>
</comment>
<comment type="subcellular location">
    <subcellularLocation>
        <location evidence="1">Plastid</location>
        <location evidence="1">Chloroplast thylakoid membrane</location>
        <topology evidence="1">Multi-pass membrane protein</topology>
    </subcellularLocation>
</comment>
<comment type="similarity">
    <text evidence="1">Belongs to the complex I subunit 1 family.</text>
</comment>
<gene>
    <name evidence="1" type="primary">ndhA</name>
</gene>
<sequence>MIIYATAVQTINSFVRLESLKEVYGLIWIFVPIFSLILGIITGVLVIVWLEREISAGIQQRIGPEYAGPLGILQALADGTKLLFKENLRPSRGNPPLFSIGPSIAVISILLSYSVIPFSNHLVLADLNIGIFLWIAISSIAPIGLLMSGYGSNNKYSFLGGLRAAAQSISYEIPLTLCVLSISLLSNSLSTVDIVEAQSKYGFWGWNLWRQPIGFIIFLISSLAECERLPFDLPEAEEELIAGYQTEYSGIKFGLFYVASYLNLLISSLFVTVLYLGGWNISIPYISILELFQRDQIFGTTIGIFITLAKTYLFLFISIATRWTLPRLRMDQLLNLGWKFLLPISLGNLLLTTSFQLFSL</sequence>
<keyword id="KW-0150">Chloroplast</keyword>
<keyword id="KW-0472">Membrane</keyword>
<keyword id="KW-0520">NAD</keyword>
<keyword id="KW-0521">NADP</keyword>
<keyword id="KW-0934">Plastid</keyword>
<keyword id="KW-0618">Plastoquinone</keyword>
<keyword id="KW-0874">Quinone</keyword>
<keyword id="KW-0793">Thylakoid</keyword>
<keyword id="KW-1278">Translocase</keyword>
<keyword id="KW-0812">Transmembrane</keyword>
<keyword id="KW-1133">Transmembrane helix</keyword>
<proteinExistence type="inferred from homology"/>
<evidence type="ECO:0000255" key="1">
    <source>
        <dbReference type="HAMAP-Rule" id="MF_01350"/>
    </source>
</evidence>
<feature type="chain" id="PRO_0000298866" description="NAD(P)H-quinone oxidoreductase subunit 1, chloroplastic">
    <location>
        <begin position="1"/>
        <end position="360"/>
    </location>
</feature>
<feature type="transmembrane region" description="Helical" evidence="1">
    <location>
        <begin position="27"/>
        <end position="47"/>
    </location>
</feature>
<feature type="transmembrane region" description="Helical" evidence="1">
    <location>
        <begin position="98"/>
        <end position="118"/>
    </location>
</feature>
<feature type="transmembrane region" description="Helical" evidence="1">
    <location>
        <begin position="129"/>
        <end position="149"/>
    </location>
</feature>
<feature type="transmembrane region" description="Helical" evidence="1">
    <location>
        <begin position="165"/>
        <end position="185"/>
    </location>
</feature>
<feature type="transmembrane region" description="Helical" evidence="1">
    <location>
        <begin position="203"/>
        <end position="223"/>
    </location>
</feature>
<feature type="transmembrane region" description="Helical" evidence="1">
    <location>
        <begin position="248"/>
        <end position="268"/>
    </location>
</feature>
<feature type="transmembrane region" description="Helical" evidence="1">
    <location>
        <begin position="269"/>
        <end position="289"/>
    </location>
</feature>
<feature type="transmembrane region" description="Helical" evidence="1">
    <location>
        <begin position="297"/>
        <end position="317"/>
    </location>
</feature>
<feature type="transmembrane region" description="Helical" evidence="1">
    <location>
        <begin position="340"/>
        <end position="360"/>
    </location>
</feature>
<geneLocation type="chloroplast"/>
<protein>
    <recommendedName>
        <fullName evidence="1">NAD(P)H-quinone oxidoreductase subunit 1, chloroplastic</fullName>
        <ecNumber evidence="1">7.1.1.-</ecNumber>
    </recommendedName>
    <alternativeName>
        <fullName evidence="1">NAD(P)H dehydrogenase subunit 1</fullName>
        <shortName evidence="1">NDH subunit 1</shortName>
    </alternativeName>
    <alternativeName>
        <fullName evidence="1">NADH-plastoquinone oxidoreductase subunit 1</fullName>
    </alternativeName>
</protein>